<organism>
    <name type="scientific">Alcanivorax borkumensis (strain ATCC 700651 / DSM 11573 / NCIMB 13689 / SK2)</name>
    <dbReference type="NCBI Taxonomy" id="393595"/>
    <lineage>
        <taxon>Bacteria</taxon>
        <taxon>Pseudomonadati</taxon>
        <taxon>Pseudomonadota</taxon>
        <taxon>Gammaproteobacteria</taxon>
        <taxon>Oceanospirillales</taxon>
        <taxon>Alcanivoracaceae</taxon>
        <taxon>Alcanivorax</taxon>
    </lineage>
</organism>
<reference key="1">
    <citation type="journal article" date="2006" name="Nat. Biotechnol.">
        <title>Genome sequence of the ubiquitous hydrocarbon-degrading marine bacterium Alcanivorax borkumensis.</title>
        <authorList>
            <person name="Schneiker S."/>
            <person name="Martins dos Santos V.A.P."/>
            <person name="Bartels D."/>
            <person name="Bekel T."/>
            <person name="Brecht M."/>
            <person name="Buhrmester J."/>
            <person name="Chernikova T.N."/>
            <person name="Denaro R."/>
            <person name="Ferrer M."/>
            <person name="Gertler C."/>
            <person name="Goesmann A."/>
            <person name="Golyshina O.V."/>
            <person name="Kaminski F."/>
            <person name="Khachane A.N."/>
            <person name="Lang S."/>
            <person name="Linke B."/>
            <person name="McHardy A.C."/>
            <person name="Meyer F."/>
            <person name="Nechitaylo T."/>
            <person name="Puehler A."/>
            <person name="Regenhardt D."/>
            <person name="Rupp O."/>
            <person name="Sabirova J.S."/>
            <person name="Selbitschka W."/>
            <person name="Yakimov M.M."/>
            <person name="Timmis K.N."/>
            <person name="Vorhoelter F.-J."/>
            <person name="Weidner S."/>
            <person name="Kaiser O."/>
            <person name="Golyshin P.N."/>
        </authorList>
    </citation>
    <scope>NUCLEOTIDE SEQUENCE [LARGE SCALE GENOMIC DNA]</scope>
    <source>
        <strain>ATCC 700651 / DSM 11573 / NCIMB 13689 / SK2</strain>
    </source>
</reference>
<accession>Q0VSR7</accession>
<evidence type="ECO:0000255" key="1">
    <source>
        <dbReference type="HAMAP-Rule" id="MF_01595"/>
    </source>
</evidence>
<proteinExistence type="inferred from homology"/>
<feature type="chain" id="PRO_0000329489" description="Polyribonucleotide nucleotidyltransferase">
    <location>
        <begin position="1"/>
        <end position="697"/>
    </location>
</feature>
<feature type="domain" description="KH" evidence="1">
    <location>
        <begin position="555"/>
        <end position="614"/>
    </location>
</feature>
<feature type="domain" description="S1 motif" evidence="1">
    <location>
        <begin position="624"/>
        <end position="692"/>
    </location>
</feature>
<feature type="binding site" evidence="1">
    <location>
        <position position="488"/>
    </location>
    <ligand>
        <name>Mg(2+)</name>
        <dbReference type="ChEBI" id="CHEBI:18420"/>
    </ligand>
</feature>
<feature type="binding site" evidence="1">
    <location>
        <position position="494"/>
    </location>
    <ligand>
        <name>Mg(2+)</name>
        <dbReference type="ChEBI" id="CHEBI:18420"/>
    </ligand>
</feature>
<keyword id="KW-0963">Cytoplasm</keyword>
<keyword id="KW-0460">Magnesium</keyword>
<keyword id="KW-0479">Metal-binding</keyword>
<keyword id="KW-0548">Nucleotidyltransferase</keyword>
<keyword id="KW-1185">Reference proteome</keyword>
<keyword id="KW-0694">RNA-binding</keyword>
<keyword id="KW-0808">Transferase</keyword>
<sequence>MFNKITKQIQFGRDTVTLETGQIARQATAAVMVRIGDTQVLVTVVGRKEANPGQNFFPLTVNYQEKTYATGRIPGGFLKREGRPSEKETLTCRLIDRPIRPLFPKGFMNEVQVVATVMSSDKNRDPDIAALIGTSAALSISGIPFSGPIGAARVGYKDGMYILNPSYSELAESALDLVVAGTEPAVLMVESEAQELSEDQMLGAVLFGHMEMQPLIQGIKEFAAEVGTETWDWKPAEQNETLKAAIKDKFAAALGEAYTITEKMARYAKVGELRDACVAEFATGEDGAPEADEVKDLFGKIEKSVVREAVVSGKPRIDGRALDAVRAIDCQVGTLAKTHGSALFTRGETQAIVTATLGGMRDAQFIDALEGSHQDHFMLQYNFPPYCVGETGFIGSPKRREIGHGRLARRGVEAVVPSVQDFPYTIRVVSEITESNGSSSMASVCGTSMALMDAGVPLTAPVAGIAMGLVKEEDGRYAVLSDILGDEDHLGDMDFKVAGTARGVTALQMDIKIEGITEEIMEKALNQANAGRLHILGEMNKAIAESRSEVSDNAPTLLTLKINPDKIRDVIGKGGATIRALTEETGCTIDIEDDGSVKIYGETREKADEAVRRVEEITAEAEVGAIYEGKVTRVVDFGAFVAIMPGTEGLLHISQIAEERVEKVTDYVNEGEIIKVKVLDVDQRGRIKLSMKEAKED</sequence>
<gene>
    <name evidence="1" type="primary">pnp</name>
    <name type="ordered locus">ABO_0333</name>
</gene>
<comment type="function">
    <text evidence="1">Involved in mRNA degradation. Catalyzes the phosphorolysis of single-stranded polyribonucleotides processively in the 3'- to 5'-direction.</text>
</comment>
<comment type="catalytic activity">
    <reaction evidence="1">
        <text>RNA(n+1) + phosphate = RNA(n) + a ribonucleoside 5'-diphosphate</text>
        <dbReference type="Rhea" id="RHEA:22096"/>
        <dbReference type="Rhea" id="RHEA-COMP:14527"/>
        <dbReference type="Rhea" id="RHEA-COMP:17342"/>
        <dbReference type="ChEBI" id="CHEBI:43474"/>
        <dbReference type="ChEBI" id="CHEBI:57930"/>
        <dbReference type="ChEBI" id="CHEBI:140395"/>
        <dbReference type="EC" id="2.7.7.8"/>
    </reaction>
</comment>
<comment type="cofactor">
    <cofactor evidence="1">
        <name>Mg(2+)</name>
        <dbReference type="ChEBI" id="CHEBI:18420"/>
    </cofactor>
</comment>
<comment type="subunit">
    <text evidence="1">Component of the RNA degradosome, which is a multiprotein complex involved in RNA processing and mRNA degradation.</text>
</comment>
<comment type="subcellular location">
    <subcellularLocation>
        <location evidence="1">Cytoplasm</location>
    </subcellularLocation>
</comment>
<comment type="similarity">
    <text evidence="1">Belongs to the polyribonucleotide nucleotidyltransferase family.</text>
</comment>
<name>PNP_ALCBS</name>
<dbReference type="EC" id="2.7.7.8" evidence="1"/>
<dbReference type="EMBL" id="AM286690">
    <property type="protein sequence ID" value="CAL15781.1"/>
    <property type="molecule type" value="Genomic_DNA"/>
</dbReference>
<dbReference type="RefSeq" id="WP_011587628.1">
    <property type="nucleotide sequence ID" value="NC_008260.1"/>
</dbReference>
<dbReference type="SMR" id="Q0VSR7"/>
<dbReference type="STRING" id="393595.ABO_0333"/>
<dbReference type="KEGG" id="abo:ABO_0333"/>
<dbReference type="eggNOG" id="COG1185">
    <property type="taxonomic scope" value="Bacteria"/>
</dbReference>
<dbReference type="HOGENOM" id="CLU_004217_2_2_6"/>
<dbReference type="OrthoDB" id="9804305at2"/>
<dbReference type="Proteomes" id="UP000008871">
    <property type="component" value="Chromosome"/>
</dbReference>
<dbReference type="GO" id="GO:0005829">
    <property type="term" value="C:cytosol"/>
    <property type="evidence" value="ECO:0007669"/>
    <property type="project" value="TreeGrafter"/>
</dbReference>
<dbReference type="GO" id="GO:0000175">
    <property type="term" value="F:3'-5'-RNA exonuclease activity"/>
    <property type="evidence" value="ECO:0007669"/>
    <property type="project" value="TreeGrafter"/>
</dbReference>
<dbReference type="GO" id="GO:0000287">
    <property type="term" value="F:magnesium ion binding"/>
    <property type="evidence" value="ECO:0007669"/>
    <property type="project" value="UniProtKB-UniRule"/>
</dbReference>
<dbReference type="GO" id="GO:0004654">
    <property type="term" value="F:polyribonucleotide nucleotidyltransferase activity"/>
    <property type="evidence" value="ECO:0007669"/>
    <property type="project" value="UniProtKB-UniRule"/>
</dbReference>
<dbReference type="GO" id="GO:0003723">
    <property type="term" value="F:RNA binding"/>
    <property type="evidence" value="ECO:0007669"/>
    <property type="project" value="UniProtKB-UniRule"/>
</dbReference>
<dbReference type="GO" id="GO:0006402">
    <property type="term" value="P:mRNA catabolic process"/>
    <property type="evidence" value="ECO:0007669"/>
    <property type="project" value="UniProtKB-UniRule"/>
</dbReference>
<dbReference type="GO" id="GO:0006396">
    <property type="term" value="P:RNA processing"/>
    <property type="evidence" value="ECO:0007669"/>
    <property type="project" value="InterPro"/>
</dbReference>
<dbReference type="CDD" id="cd02393">
    <property type="entry name" value="KH-I_PNPase"/>
    <property type="match status" value="1"/>
</dbReference>
<dbReference type="CDD" id="cd11363">
    <property type="entry name" value="RNase_PH_PNPase_1"/>
    <property type="match status" value="1"/>
</dbReference>
<dbReference type="CDD" id="cd11364">
    <property type="entry name" value="RNase_PH_PNPase_2"/>
    <property type="match status" value="1"/>
</dbReference>
<dbReference type="CDD" id="cd04472">
    <property type="entry name" value="S1_PNPase"/>
    <property type="match status" value="1"/>
</dbReference>
<dbReference type="FunFam" id="2.40.50.140:FF:000023">
    <property type="entry name" value="Polyribonucleotide nucleotidyltransferase"/>
    <property type="match status" value="1"/>
</dbReference>
<dbReference type="FunFam" id="3.30.1370.10:FF:000001">
    <property type="entry name" value="Polyribonucleotide nucleotidyltransferase"/>
    <property type="match status" value="1"/>
</dbReference>
<dbReference type="FunFam" id="3.30.230.70:FF:000001">
    <property type="entry name" value="Polyribonucleotide nucleotidyltransferase"/>
    <property type="match status" value="1"/>
</dbReference>
<dbReference type="FunFam" id="3.30.230.70:FF:000002">
    <property type="entry name" value="Polyribonucleotide nucleotidyltransferase"/>
    <property type="match status" value="1"/>
</dbReference>
<dbReference type="Gene3D" id="3.30.230.70">
    <property type="entry name" value="GHMP Kinase, N-terminal domain"/>
    <property type="match status" value="2"/>
</dbReference>
<dbReference type="Gene3D" id="3.30.1370.10">
    <property type="entry name" value="K Homology domain, type 1"/>
    <property type="match status" value="1"/>
</dbReference>
<dbReference type="Gene3D" id="2.40.50.140">
    <property type="entry name" value="Nucleic acid-binding proteins"/>
    <property type="match status" value="1"/>
</dbReference>
<dbReference type="HAMAP" id="MF_01595">
    <property type="entry name" value="PNPase"/>
    <property type="match status" value="1"/>
</dbReference>
<dbReference type="InterPro" id="IPR001247">
    <property type="entry name" value="ExoRNase_PH_dom1"/>
</dbReference>
<dbReference type="InterPro" id="IPR015847">
    <property type="entry name" value="ExoRNase_PH_dom2"/>
</dbReference>
<dbReference type="InterPro" id="IPR036345">
    <property type="entry name" value="ExoRNase_PH_dom2_sf"/>
</dbReference>
<dbReference type="InterPro" id="IPR004087">
    <property type="entry name" value="KH_dom"/>
</dbReference>
<dbReference type="InterPro" id="IPR004088">
    <property type="entry name" value="KH_dom_type_1"/>
</dbReference>
<dbReference type="InterPro" id="IPR036612">
    <property type="entry name" value="KH_dom_type_1_sf"/>
</dbReference>
<dbReference type="InterPro" id="IPR012340">
    <property type="entry name" value="NA-bd_OB-fold"/>
</dbReference>
<dbReference type="InterPro" id="IPR012162">
    <property type="entry name" value="PNPase"/>
</dbReference>
<dbReference type="InterPro" id="IPR027408">
    <property type="entry name" value="PNPase/RNase_PH_dom_sf"/>
</dbReference>
<dbReference type="InterPro" id="IPR015848">
    <property type="entry name" value="PNPase_PH_RNA-bd_bac/org-type"/>
</dbReference>
<dbReference type="InterPro" id="IPR020568">
    <property type="entry name" value="Ribosomal_Su5_D2-typ_SF"/>
</dbReference>
<dbReference type="InterPro" id="IPR003029">
    <property type="entry name" value="S1_domain"/>
</dbReference>
<dbReference type="NCBIfam" id="TIGR03591">
    <property type="entry name" value="polynuc_phos"/>
    <property type="match status" value="1"/>
</dbReference>
<dbReference type="NCBIfam" id="NF008805">
    <property type="entry name" value="PRK11824.1"/>
    <property type="match status" value="1"/>
</dbReference>
<dbReference type="PANTHER" id="PTHR11252">
    <property type="entry name" value="POLYRIBONUCLEOTIDE NUCLEOTIDYLTRANSFERASE"/>
    <property type="match status" value="1"/>
</dbReference>
<dbReference type="PANTHER" id="PTHR11252:SF0">
    <property type="entry name" value="POLYRIBONUCLEOTIDE NUCLEOTIDYLTRANSFERASE 1, MITOCHONDRIAL"/>
    <property type="match status" value="1"/>
</dbReference>
<dbReference type="Pfam" id="PF00013">
    <property type="entry name" value="KH_1"/>
    <property type="match status" value="1"/>
</dbReference>
<dbReference type="Pfam" id="PF03726">
    <property type="entry name" value="PNPase"/>
    <property type="match status" value="1"/>
</dbReference>
<dbReference type="Pfam" id="PF01138">
    <property type="entry name" value="RNase_PH"/>
    <property type="match status" value="2"/>
</dbReference>
<dbReference type="Pfam" id="PF03725">
    <property type="entry name" value="RNase_PH_C"/>
    <property type="match status" value="2"/>
</dbReference>
<dbReference type="Pfam" id="PF00575">
    <property type="entry name" value="S1"/>
    <property type="match status" value="1"/>
</dbReference>
<dbReference type="PIRSF" id="PIRSF005499">
    <property type="entry name" value="PNPase"/>
    <property type="match status" value="1"/>
</dbReference>
<dbReference type="SMART" id="SM00322">
    <property type="entry name" value="KH"/>
    <property type="match status" value="1"/>
</dbReference>
<dbReference type="SMART" id="SM00316">
    <property type="entry name" value="S1"/>
    <property type="match status" value="1"/>
</dbReference>
<dbReference type="SUPFAM" id="SSF54791">
    <property type="entry name" value="Eukaryotic type KH-domain (KH-domain type I)"/>
    <property type="match status" value="1"/>
</dbReference>
<dbReference type="SUPFAM" id="SSF50249">
    <property type="entry name" value="Nucleic acid-binding proteins"/>
    <property type="match status" value="1"/>
</dbReference>
<dbReference type="SUPFAM" id="SSF55666">
    <property type="entry name" value="Ribonuclease PH domain 2-like"/>
    <property type="match status" value="2"/>
</dbReference>
<dbReference type="SUPFAM" id="SSF54211">
    <property type="entry name" value="Ribosomal protein S5 domain 2-like"/>
    <property type="match status" value="2"/>
</dbReference>
<dbReference type="PROSITE" id="PS50084">
    <property type="entry name" value="KH_TYPE_1"/>
    <property type="match status" value="1"/>
</dbReference>
<dbReference type="PROSITE" id="PS50126">
    <property type="entry name" value="S1"/>
    <property type="match status" value="1"/>
</dbReference>
<protein>
    <recommendedName>
        <fullName evidence="1">Polyribonucleotide nucleotidyltransferase</fullName>
        <ecNumber evidence="1">2.7.7.8</ecNumber>
    </recommendedName>
    <alternativeName>
        <fullName evidence="1">Polynucleotide phosphorylase</fullName>
        <shortName evidence="1">PNPase</shortName>
    </alternativeName>
</protein>